<proteinExistence type="inferred from homology"/>
<feature type="chain" id="PRO_0000405448" description="Cytochrome c oxidase assembly factor 3, mitochondrial">
    <location>
        <begin position="1"/>
        <end position="85"/>
    </location>
</feature>
<feature type="topological domain" description="Mitochondrial matrix" evidence="1">
    <location>
        <begin position="1"/>
        <end position="26"/>
    </location>
</feature>
<feature type="transmembrane region" description="Helical" evidence="2">
    <location>
        <begin position="27"/>
        <end position="49"/>
    </location>
</feature>
<feature type="topological domain" description="Mitochondrial intermembrane" evidence="1">
    <location>
        <begin position="50"/>
        <end position="85"/>
    </location>
</feature>
<gene>
    <name type="primary">COA3</name>
    <name type="synonym">COX25</name>
    <name type="synonym">RRG10</name>
    <name type="ORF">EC1118_1J11_1893g</name>
</gene>
<keyword id="KW-0472">Membrane</keyword>
<keyword id="KW-0496">Mitochondrion</keyword>
<keyword id="KW-0999">Mitochondrion inner membrane</keyword>
<keyword id="KW-0812">Transmembrane</keyword>
<keyword id="KW-1133">Transmembrane helix</keyword>
<name>COA3_YEAS8</name>
<sequence length="85" mass="9882">MVLNPSKYQDTRTWKMTPAMIRARKPFFKGNMLGLTLLLGVTGSVYYYTYHFLHKDNDFADVPIPPIDPQELEALKKEYEAKKKA</sequence>
<comment type="function">
    <text evidence="1">Required for assembly of cytochrome c oxidase (complex IV). With COX14, negatively regulates COX1 translation and is involved in MSS51 association with newly synthesized COX1 (By similarity).</text>
</comment>
<comment type="subunit">
    <text evidence="1">Component of 250-400 kDa complexes called cytochrome oxidase assembly intermediates or COA complexes composed at least COA3, COX14, COX5A, SHY1 and SSC1. Interacts with COX1 and MSS51.</text>
</comment>
<comment type="subcellular location">
    <subcellularLocation>
        <location evidence="1">Mitochondrion inner membrane</location>
        <topology>Single-pass membrane protein</topology>
    </subcellularLocation>
</comment>
<comment type="similarity">
    <text evidence="3">Belongs to the COA3 family.</text>
</comment>
<protein>
    <recommendedName>
        <fullName>Cytochrome c oxidase assembly factor 3, mitochondrial</fullName>
    </recommendedName>
    <alternativeName>
        <fullName>Cytochrome c oxidase protein 25</fullName>
    </alternativeName>
    <alternativeName>
        <fullName>Required for respiratory growth protein 10</fullName>
    </alternativeName>
</protein>
<dbReference type="EMBL" id="FN393075">
    <property type="protein sequence ID" value="CAY80717.2"/>
    <property type="molecule type" value="Genomic_DNA"/>
</dbReference>
<dbReference type="SMR" id="C8ZBF1"/>
<dbReference type="HOGENOM" id="CLU_153999_0_0_1"/>
<dbReference type="OrthoDB" id="6910at4893"/>
<dbReference type="Proteomes" id="UP000000286">
    <property type="component" value="Chromosome X, Scaffold EC1118_1J11"/>
</dbReference>
<dbReference type="GO" id="GO:0005743">
    <property type="term" value="C:mitochondrial inner membrane"/>
    <property type="evidence" value="ECO:0007669"/>
    <property type="project" value="UniProtKB-SubCell"/>
</dbReference>
<dbReference type="GO" id="GO:0033617">
    <property type="term" value="P:mitochondrial cytochrome c oxidase assembly"/>
    <property type="evidence" value="ECO:0007669"/>
    <property type="project" value="InterPro"/>
</dbReference>
<dbReference type="InterPro" id="IPR041752">
    <property type="entry name" value="Coa3"/>
</dbReference>
<dbReference type="PANTHER" id="PTHR15642:SF3">
    <property type="entry name" value="CYTOCHROME C OXIDASE ASSEMBLY FACTOR 3 HOMOLOG, MITOCHONDRIAL"/>
    <property type="match status" value="1"/>
</dbReference>
<dbReference type="PANTHER" id="PTHR15642">
    <property type="entry name" value="CYTOCHROME C OXIDASE ASSEMBLY FACTOR 3, MITOCHONDRIAL"/>
    <property type="match status" value="1"/>
</dbReference>
<accession>C8ZBF1</accession>
<reference key="1">
    <citation type="journal article" date="2009" name="Proc. Natl. Acad. Sci. U.S.A.">
        <title>Eukaryote-to-eukaryote gene transfer events revealed by the genome sequence of the wine yeast Saccharomyces cerevisiae EC1118.</title>
        <authorList>
            <person name="Novo M."/>
            <person name="Bigey F."/>
            <person name="Beyne E."/>
            <person name="Galeote V."/>
            <person name="Gavory F."/>
            <person name="Mallet S."/>
            <person name="Cambon B."/>
            <person name="Legras J.-L."/>
            <person name="Wincker P."/>
            <person name="Casaregola S."/>
            <person name="Dequin S."/>
        </authorList>
    </citation>
    <scope>NUCLEOTIDE SEQUENCE [LARGE SCALE GENOMIC DNA]</scope>
    <source>
        <strain>Lalvin EC1118 / Prise de mousse</strain>
    </source>
</reference>
<organism>
    <name type="scientific">Saccharomyces cerevisiae (strain Lalvin EC1118 / Prise de mousse)</name>
    <name type="common">Baker's yeast</name>
    <dbReference type="NCBI Taxonomy" id="643680"/>
    <lineage>
        <taxon>Eukaryota</taxon>
        <taxon>Fungi</taxon>
        <taxon>Dikarya</taxon>
        <taxon>Ascomycota</taxon>
        <taxon>Saccharomycotina</taxon>
        <taxon>Saccharomycetes</taxon>
        <taxon>Saccharomycetales</taxon>
        <taxon>Saccharomycetaceae</taxon>
        <taxon>Saccharomyces</taxon>
    </lineage>
</organism>
<evidence type="ECO:0000250" key="1"/>
<evidence type="ECO:0000255" key="2"/>
<evidence type="ECO:0000305" key="3"/>